<feature type="signal peptide" evidence="1">
    <location>
        <begin position="1"/>
        <end position="28"/>
    </location>
</feature>
<feature type="peptide" id="PRO_0000025397" description="Peptide Y">
    <location>
        <begin position="29"/>
        <end position="64"/>
    </location>
</feature>
<feature type="propeptide" id="PRO_0000025398" description="C-terminal extension">
    <location>
        <begin position="68"/>
        <end position="97"/>
    </location>
</feature>
<feature type="modified residue" description="Tyrosine amide" evidence="1">
    <location>
        <position position="64"/>
    </location>
</feature>
<organism>
    <name type="scientific">Dicentrarchus labrax</name>
    <name type="common">European seabass</name>
    <name type="synonym">Morone labrax</name>
    <dbReference type="NCBI Taxonomy" id="13489"/>
    <lineage>
        <taxon>Eukaryota</taxon>
        <taxon>Metazoa</taxon>
        <taxon>Chordata</taxon>
        <taxon>Craniata</taxon>
        <taxon>Vertebrata</taxon>
        <taxon>Euteleostomi</taxon>
        <taxon>Actinopterygii</taxon>
        <taxon>Neopterygii</taxon>
        <taxon>Teleostei</taxon>
        <taxon>Neoteleostei</taxon>
        <taxon>Acanthomorphata</taxon>
        <taxon>Eupercaria</taxon>
        <taxon>Moronidae</taxon>
        <taxon>Dicentrarchus</taxon>
    </lineage>
</organism>
<reference key="1">
    <citation type="journal article" date="1998" name="Ann. N. Y. Acad. Sci.">
        <title>Cloning of neuropeptide Y, peptide YY, and peptide Y from sea bass (Dicentrarchus labrax), a marine teleost.</title>
        <authorList>
            <person name="Cerda-Reverter J.M."/>
            <person name="Martinez-Rodriguez G."/>
            <person name="Zanuy S."/>
            <person name="Carrillo M."/>
            <person name="Larhammar D."/>
        </authorList>
    </citation>
    <scope>NUCLEOTIDE SEQUENCE [MRNA]</scope>
    <source>
        <tissue>Brain</tissue>
    </source>
</reference>
<name>PY_DICLA</name>
<keyword id="KW-0027">Amidation</keyword>
<keyword id="KW-0165">Cleavage on pair of basic residues</keyword>
<keyword id="KW-0372">Hormone</keyword>
<keyword id="KW-0527">Neuropeptide</keyword>
<keyword id="KW-1185">Reference proteome</keyword>
<keyword id="KW-0964">Secreted</keyword>
<keyword id="KW-0732">Signal</keyword>
<protein>
    <recommendedName>
        <fullName>Peptide Y</fullName>
    </recommendedName>
</protein>
<comment type="subcellular location">
    <subcellularLocation>
        <location>Secreted</location>
    </subcellularLocation>
</comment>
<comment type="similarity">
    <text evidence="2">Belongs to the NPY family.</text>
</comment>
<sequence length="97" mass="10921">MANMLRSWMMLAALAVCLLVCLSSFADAYPPKPESPGSNASPEDWAKYHAAVRHYVNLITRQRYGKRSTPEQAVAWLLFGADSSQDAEPRLDYSDQW</sequence>
<evidence type="ECO:0000255" key="1"/>
<evidence type="ECO:0000305" key="2"/>
<proteinExistence type="inferred from homology"/>
<accession>Q9PT98</accession>
<dbReference type="EMBL" id="AJ005380">
    <property type="protein sequence ID" value="CAB64934.1"/>
    <property type="molecule type" value="mRNA"/>
</dbReference>
<dbReference type="RefSeq" id="XP_051273764.1">
    <property type="nucleotide sequence ID" value="XM_051417804.1"/>
</dbReference>
<dbReference type="SMR" id="Q9PT98"/>
<dbReference type="GeneID" id="127373382"/>
<dbReference type="OMA" id="EEWAKYH"/>
<dbReference type="OrthoDB" id="9852947at2759"/>
<dbReference type="Proteomes" id="UP000694389">
    <property type="component" value="Unplaced"/>
</dbReference>
<dbReference type="GO" id="GO:0005615">
    <property type="term" value="C:extracellular space"/>
    <property type="evidence" value="ECO:0007669"/>
    <property type="project" value="TreeGrafter"/>
</dbReference>
<dbReference type="GO" id="GO:0005184">
    <property type="term" value="F:neuropeptide hormone activity"/>
    <property type="evidence" value="ECO:0007669"/>
    <property type="project" value="TreeGrafter"/>
</dbReference>
<dbReference type="GO" id="GO:0031841">
    <property type="term" value="F:neuropeptide Y receptor binding"/>
    <property type="evidence" value="ECO:0007669"/>
    <property type="project" value="TreeGrafter"/>
</dbReference>
<dbReference type="GO" id="GO:0007631">
    <property type="term" value="P:feeding behavior"/>
    <property type="evidence" value="ECO:0007669"/>
    <property type="project" value="TreeGrafter"/>
</dbReference>
<dbReference type="GO" id="GO:0007218">
    <property type="term" value="P:neuropeptide signaling pathway"/>
    <property type="evidence" value="ECO:0007669"/>
    <property type="project" value="UniProtKB-KW"/>
</dbReference>
<dbReference type="CDD" id="cd00126">
    <property type="entry name" value="PAH"/>
    <property type="match status" value="1"/>
</dbReference>
<dbReference type="Gene3D" id="6.10.250.900">
    <property type="match status" value="1"/>
</dbReference>
<dbReference type="InterPro" id="IPR001955">
    <property type="entry name" value="Pancreatic_hormone-like"/>
</dbReference>
<dbReference type="InterPro" id="IPR020392">
    <property type="entry name" value="Pancreatic_hormone-like_CS"/>
</dbReference>
<dbReference type="PANTHER" id="PTHR10533">
    <property type="entry name" value="NEUROPEPTIDE Y/PANCREATIC HORMONE/PEPTIDE YY"/>
    <property type="match status" value="1"/>
</dbReference>
<dbReference type="PANTHER" id="PTHR10533:SF14">
    <property type="entry name" value="PEPTIDE YY-RELATED"/>
    <property type="match status" value="1"/>
</dbReference>
<dbReference type="Pfam" id="PF00159">
    <property type="entry name" value="Hormone_3"/>
    <property type="match status" value="1"/>
</dbReference>
<dbReference type="PRINTS" id="PR00278">
    <property type="entry name" value="PANCHORMONE"/>
</dbReference>
<dbReference type="SMART" id="SM00309">
    <property type="entry name" value="PAH"/>
    <property type="match status" value="1"/>
</dbReference>
<dbReference type="PROSITE" id="PS00265">
    <property type="entry name" value="PANCREATIC_HORMONE_1"/>
    <property type="match status" value="1"/>
</dbReference>
<dbReference type="PROSITE" id="PS50276">
    <property type="entry name" value="PANCREATIC_HORMONE_2"/>
    <property type="match status" value="1"/>
</dbReference>